<gene>
    <name type="ORF">ORF3</name>
</gene>
<protein>
    <recommendedName>
        <fullName>Movement protein p22</fullName>
    </recommendedName>
    <alternativeName>
        <fullName>p21</fullName>
    </alternativeName>
</protein>
<name>MP22_TBSVT</name>
<organismHost>
    <name type="scientific">Capsicum annuum</name>
    <name type="common">Capsicum pepper</name>
    <dbReference type="NCBI Taxonomy" id="4072"/>
</organismHost>
<organismHost>
    <name type="scientific">Malus</name>
    <dbReference type="NCBI Taxonomy" id="3749"/>
</organismHost>
<organismHost>
    <name type="scientific">Pyrus</name>
    <name type="common">pears</name>
    <dbReference type="NCBI Taxonomy" id="3766"/>
</organismHost>
<organismHost>
    <name type="scientific">Solanum lycopersicum</name>
    <name type="common">Tomato</name>
    <name type="synonym">Lycopersicon esculentum</name>
    <dbReference type="NCBI Taxonomy" id="4081"/>
</organismHost>
<organismHost>
    <name type="scientific">Solanum melongena</name>
    <name type="common">eggplant</name>
    <dbReference type="NCBI Taxonomy" id="4111"/>
</organismHost>
<organismHost>
    <name type="scientific">Tolmiea menziesii</name>
    <dbReference type="NCBI Taxonomy" id="29777"/>
</organismHost>
<organismHost>
    <name type="scientific">Tulipa</name>
    <dbReference type="NCBI Taxonomy" id="13305"/>
</organismHost>
<sequence>MDTEYEQVNKPWNELYKETTLGNKLTVNVGMEDQEVPLLPSNFLTKVRVGLSGGYITMRRIRIKIIPLVSRKAGVSGKLYLRDISDTKGRKLHCTESLDLGREIRLTMQHLDFSVSTRSDVPIVFGFEELVSPFLEGRELFSISVRWQFGLSKNCYSLPQSKWKVMYQEDALKVLKPSKKKASKTDSSV</sequence>
<proteinExistence type="inferred from homology"/>
<reference key="1">
    <citation type="journal article" date="1996" name="Phytopathology">
        <title>Different tomato bushy stunt virus strains cause disease outbreaks on solanaceous crops in Spain.</title>
        <authorList>
            <person name="Luis-Areteaga M."/>
            <person name="Rodriguez-Cerezo E."/>
            <person name="Fraile A."/>
            <person name="Saez E."/>
            <person name="Garcia-Arenal F."/>
        </authorList>
        <dbReference type="AGRICOLA" id="IND20581771"/>
    </citation>
    <scope>NUCLEOTIDE SEQUENCE [GENOMIC RNA]</scope>
</reference>
<feature type="chain" id="PRO_0000222894" description="Movement protein p22">
    <location>
        <begin position="1"/>
        <end position="189"/>
    </location>
</feature>
<keyword id="KW-1043">Host membrane</keyword>
<keyword id="KW-0945">Host-virus interaction</keyword>
<keyword id="KW-0472">Membrane</keyword>
<keyword id="KW-0597">Phosphoprotein</keyword>
<keyword id="KW-0694">RNA-binding</keyword>
<keyword id="KW-0813">Transport</keyword>
<keyword id="KW-0916">Viral movement protein</keyword>
<organism>
    <name type="scientific">Tomato bushy stunt virus (strain type)</name>
    <name type="common">TBSV</name>
    <dbReference type="NCBI Taxonomy" id="70159"/>
    <lineage>
        <taxon>Viruses</taxon>
        <taxon>Riboviria</taxon>
        <taxon>Orthornavirae</taxon>
        <taxon>Kitrinoviricota</taxon>
        <taxon>Tolucaviricetes</taxon>
        <taxon>Tolivirales</taxon>
        <taxon>Tombusviridae</taxon>
        <taxon>Procedovirinae</taxon>
        <taxon>Tombusvirus</taxon>
        <taxon>Tombusvirus lycopersici</taxon>
    </lineage>
</organism>
<comment type="function">
    <text evidence="1">Cell-to-cell movement. Displays RNA-binding activity (By similarity).</text>
</comment>
<comment type="subunit">
    <text evidence="1">Interacts with host protein HFI22.</text>
</comment>
<comment type="subcellular location">
    <subcellularLocation>
        <location evidence="1">Host membrane</location>
    </subcellularLocation>
</comment>
<comment type="PTM">
    <text evidence="1">Phosphorylated.</text>
</comment>
<comment type="similarity">
    <text evidence="2">Belongs to the tombusvirus/aureusvirus movement protein p22 family.</text>
</comment>
<dbReference type="EMBL" id="Z68899">
    <property type="protein sequence ID" value="CAA93131.1"/>
    <property type="molecule type" value="Genomic_RNA"/>
</dbReference>
<dbReference type="GO" id="GO:0033644">
    <property type="term" value="C:host cell membrane"/>
    <property type="evidence" value="ECO:0007669"/>
    <property type="project" value="UniProtKB-SubCell"/>
</dbReference>
<dbReference type="GO" id="GO:0016020">
    <property type="term" value="C:membrane"/>
    <property type="evidence" value="ECO:0007669"/>
    <property type="project" value="UniProtKB-KW"/>
</dbReference>
<dbReference type="GO" id="GO:0019028">
    <property type="term" value="C:viral capsid"/>
    <property type="evidence" value="ECO:0007669"/>
    <property type="project" value="InterPro"/>
</dbReference>
<dbReference type="GO" id="GO:0003723">
    <property type="term" value="F:RNA binding"/>
    <property type="evidence" value="ECO:0007669"/>
    <property type="project" value="UniProtKB-KW"/>
</dbReference>
<dbReference type="GO" id="GO:0046740">
    <property type="term" value="P:transport of virus in host, cell to cell"/>
    <property type="evidence" value="ECO:0007669"/>
    <property type="project" value="UniProtKB-KW"/>
</dbReference>
<dbReference type="InterPro" id="IPR005332">
    <property type="entry name" value="TBSV_p22"/>
</dbReference>
<dbReference type="Pfam" id="PF03558">
    <property type="entry name" value="TBSV_P22"/>
    <property type="match status" value="1"/>
</dbReference>
<evidence type="ECO:0000250" key="1"/>
<evidence type="ECO:0000305" key="2"/>
<accession>P50634</accession>